<comment type="similarity">
    <text evidence="1">Belongs to the bacterial ribosomal protein bL34 family.</text>
</comment>
<protein>
    <recommendedName>
        <fullName evidence="1">Large ribosomal subunit protein bL34</fullName>
    </recommendedName>
    <alternativeName>
        <fullName evidence="2">50S ribosomal protein L34</fullName>
    </alternativeName>
</protein>
<dbReference type="EMBL" id="AE017354">
    <property type="protein sequence ID" value="AAU29050.1"/>
    <property type="molecule type" value="Genomic_DNA"/>
</dbReference>
<dbReference type="RefSeq" id="WP_010948689.1">
    <property type="nucleotide sequence ID" value="NC_002942.5"/>
</dbReference>
<dbReference type="RefSeq" id="YP_096997.1">
    <property type="nucleotide sequence ID" value="NC_002942.5"/>
</dbReference>
<dbReference type="SMR" id="Q5ZR78"/>
<dbReference type="STRING" id="272624.lpg3005"/>
<dbReference type="PaxDb" id="272624-lpg3005"/>
<dbReference type="GeneID" id="57037010"/>
<dbReference type="KEGG" id="lpn:lpg3005"/>
<dbReference type="PATRIC" id="fig|272624.6.peg.3212"/>
<dbReference type="eggNOG" id="COG0230">
    <property type="taxonomic scope" value="Bacteria"/>
</dbReference>
<dbReference type="HOGENOM" id="CLU_129938_2_0_6"/>
<dbReference type="OrthoDB" id="9804164at2"/>
<dbReference type="Proteomes" id="UP000000609">
    <property type="component" value="Chromosome"/>
</dbReference>
<dbReference type="GO" id="GO:1990904">
    <property type="term" value="C:ribonucleoprotein complex"/>
    <property type="evidence" value="ECO:0007669"/>
    <property type="project" value="UniProtKB-KW"/>
</dbReference>
<dbReference type="GO" id="GO:0005840">
    <property type="term" value="C:ribosome"/>
    <property type="evidence" value="ECO:0007669"/>
    <property type="project" value="UniProtKB-KW"/>
</dbReference>
<dbReference type="GO" id="GO:0003735">
    <property type="term" value="F:structural constituent of ribosome"/>
    <property type="evidence" value="ECO:0007669"/>
    <property type="project" value="InterPro"/>
</dbReference>
<dbReference type="GO" id="GO:0006412">
    <property type="term" value="P:translation"/>
    <property type="evidence" value="ECO:0007669"/>
    <property type="project" value="UniProtKB-UniRule"/>
</dbReference>
<dbReference type="FunFam" id="1.10.287.3980:FF:000001">
    <property type="entry name" value="Mitochondrial ribosomal protein L34"/>
    <property type="match status" value="1"/>
</dbReference>
<dbReference type="Gene3D" id="1.10.287.3980">
    <property type="match status" value="1"/>
</dbReference>
<dbReference type="HAMAP" id="MF_00391">
    <property type="entry name" value="Ribosomal_bL34"/>
    <property type="match status" value="1"/>
</dbReference>
<dbReference type="InterPro" id="IPR000271">
    <property type="entry name" value="Ribosomal_bL34"/>
</dbReference>
<dbReference type="InterPro" id="IPR020939">
    <property type="entry name" value="Ribosomal_bL34_CS"/>
</dbReference>
<dbReference type="NCBIfam" id="TIGR01030">
    <property type="entry name" value="rpmH_bact"/>
    <property type="match status" value="1"/>
</dbReference>
<dbReference type="PANTHER" id="PTHR14503:SF4">
    <property type="entry name" value="LARGE RIBOSOMAL SUBUNIT PROTEIN BL34M"/>
    <property type="match status" value="1"/>
</dbReference>
<dbReference type="PANTHER" id="PTHR14503">
    <property type="entry name" value="MITOCHONDRIAL RIBOSOMAL PROTEIN 34 FAMILY MEMBER"/>
    <property type="match status" value="1"/>
</dbReference>
<dbReference type="Pfam" id="PF00468">
    <property type="entry name" value="Ribosomal_L34"/>
    <property type="match status" value="1"/>
</dbReference>
<dbReference type="PROSITE" id="PS00784">
    <property type="entry name" value="RIBOSOMAL_L34"/>
    <property type="match status" value="1"/>
</dbReference>
<proteinExistence type="inferred from homology"/>
<gene>
    <name evidence="1" type="primary">rpmH</name>
    <name type="ordered locus">lpg3005</name>
</gene>
<reference key="1">
    <citation type="journal article" date="2004" name="Science">
        <title>The genomic sequence of the accidental pathogen Legionella pneumophila.</title>
        <authorList>
            <person name="Chien M."/>
            <person name="Morozova I."/>
            <person name="Shi S."/>
            <person name="Sheng H."/>
            <person name="Chen J."/>
            <person name="Gomez S.M."/>
            <person name="Asamani G."/>
            <person name="Hill K."/>
            <person name="Nuara J."/>
            <person name="Feder M."/>
            <person name="Rineer J."/>
            <person name="Greenberg J.J."/>
            <person name="Steshenko V."/>
            <person name="Park S.H."/>
            <person name="Zhao B."/>
            <person name="Teplitskaya E."/>
            <person name="Edwards J.R."/>
            <person name="Pampou S."/>
            <person name="Georghiou A."/>
            <person name="Chou I.-C."/>
            <person name="Iannuccilli W."/>
            <person name="Ulz M.E."/>
            <person name="Kim D.H."/>
            <person name="Geringer-Sameth A."/>
            <person name="Goldsberry C."/>
            <person name="Morozov P."/>
            <person name="Fischer S.G."/>
            <person name="Segal G."/>
            <person name="Qu X."/>
            <person name="Rzhetsky A."/>
            <person name="Zhang P."/>
            <person name="Cayanis E."/>
            <person name="De Jong P.J."/>
            <person name="Ju J."/>
            <person name="Kalachikov S."/>
            <person name="Shuman H.A."/>
            <person name="Russo J.J."/>
        </authorList>
    </citation>
    <scope>NUCLEOTIDE SEQUENCE [LARGE SCALE GENOMIC DNA]</scope>
    <source>
        <strain>Philadelphia 1 / ATCC 33152 / DSM 7513</strain>
    </source>
</reference>
<evidence type="ECO:0000255" key="1">
    <source>
        <dbReference type="HAMAP-Rule" id="MF_00391"/>
    </source>
</evidence>
<evidence type="ECO:0000305" key="2"/>
<feature type="chain" id="PRO_0000187398" description="Large ribosomal subunit protein bL34">
    <location>
        <begin position="1"/>
        <end position="44"/>
    </location>
</feature>
<organism>
    <name type="scientific">Legionella pneumophila subsp. pneumophila (strain Philadelphia 1 / ATCC 33152 / DSM 7513)</name>
    <dbReference type="NCBI Taxonomy" id="272624"/>
    <lineage>
        <taxon>Bacteria</taxon>
        <taxon>Pseudomonadati</taxon>
        <taxon>Pseudomonadota</taxon>
        <taxon>Gammaproteobacteria</taxon>
        <taxon>Legionellales</taxon>
        <taxon>Legionellaceae</taxon>
        <taxon>Legionella</taxon>
    </lineage>
</organism>
<accession>Q5ZR78</accession>
<sequence>MKRTFQPSNLKRKRDHGFRLRMSTRAGRLVIKRRRAKGRKRLSA</sequence>
<keyword id="KW-1185">Reference proteome</keyword>
<keyword id="KW-0687">Ribonucleoprotein</keyword>
<keyword id="KW-0689">Ribosomal protein</keyword>
<name>RL34_LEGPH</name>